<gene>
    <name type="primary">TMED4</name>
    <name type="synonym">ERS25</name>
</gene>
<sequence length="227" mass="25943">MAGVGAGPLRAMGRQALLLLALCATGAQGLYFHIGETEKRCFIEEIPDETMVIGNYRTQMWDKQKEVFLPSTPGLGMHVEVKDPDGKVVLSRQYGSEGRFTFTSHTPGDHQICLHSNSTRMALFAGGKLRVHLDIQVGEHANNYPEIAAKDKLTELQLRARQLLDQVEQIQKEQDYQRYREERFRLTSESTNQRVLWWSIAQTVILILTGIWQMRHLKSFFEAKKLV</sequence>
<keyword id="KW-0025">Alternative splicing</keyword>
<keyword id="KW-0175">Coiled coil</keyword>
<keyword id="KW-0256">Endoplasmic reticulum</keyword>
<keyword id="KW-0325">Glycoprotein</keyword>
<keyword id="KW-0472">Membrane</keyword>
<keyword id="KW-0653">Protein transport</keyword>
<keyword id="KW-1267">Proteomics identification</keyword>
<keyword id="KW-1185">Reference proteome</keyword>
<keyword id="KW-0732">Signal</keyword>
<keyword id="KW-0812">Transmembrane</keyword>
<keyword id="KW-1133">Transmembrane helix</keyword>
<keyword id="KW-0813">Transport</keyword>
<accession>Q7Z7H5</accession>
<accession>A4D2K8</accession>
<accession>B4DFJ4</accession>
<accession>Q56VW3</accession>
<accession>Q7Z432</accession>
<accession>Q8N2P6</accession>
<proteinExistence type="evidence at protein level"/>
<reference key="1">
    <citation type="journal article" date="2004" name="Nat. Genet.">
        <title>Complete sequencing and characterization of 21,243 full-length human cDNAs.</title>
        <authorList>
            <person name="Ota T."/>
            <person name="Suzuki Y."/>
            <person name="Nishikawa T."/>
            <person name="Otsuki T."/>
            <person name="Sugiyama T."/>
            <person name="Irie R."/>
            <person name="Wakamatsu A."/>
            <person name="Hayashi K."/>
            <person name="Sato H."/>
            <person name="Nagai K."/>
            <person name="Kimura K."/>
            <person name="Makita H."/>
            <person name="Sekine M."/>
            <person name="Obayashi M."/>
            <person name="Nishi T."/>
            <person name="Shibahara T."/>
            <person name="Tanaka T."/>
            <person name="Ishii S."/>
            <person name="Yamamoto J."/>
            <person name="Saito K."/>
            <person name="Kawai Y."/>
            <person name="Isono Y."/>
            <person name="Nakamura Y."/>
            <person name="Nagahari K."/>
            <person name="Murakami K."/>
            <person name="Yasuda T."/>
            <person name="Iwayanagi T."/>
            <person name="Wagatsuma M."/>
            <person name="Shiratori A."/>
            <person name="Sudo H."/>
            <person name="Hosoiri T."/>
            <person name="Kaku Y."/>
            <person name="Kodaira H."/>
            <person name="Kondo H."/>
            <person name="Sugawara M."/>
            <person name="Takahashi M."/>
            <person name="Kanda K."/>
            <person name="Yokoi T."/>
            <person name="Furuya T."/>
            <person name="Kikkawa E."/>
            <person name="Omura Y."/>
            <person name="Abe K."/>
            <person name="Kamihara K."/>
            <person name="Katsuta N."/>
            <person name="Sato K."/>
            <person name="Tanikawa M."/>
            <person name="Yamazaki M."/>
            <person name="Ninomiya K."/>
            <person name="Ishibashi T."/>
            <person name="Yamashita H."/>
            <person name="Murakawa K."/>
            <person name="Fujimori K."/>
            <person name="Tanai H."/>
            <person name="Kimata M."/>
            <person name="Watanabe M."/>
            <person name="Hiraoka S."/>
            <person name="Chiba Y."/>
            <person name="Ishida S."/>
            <person name="Ono Y."/>
            <person name="Takiguchi S."/>
            <person name="Watanabe S."/>
            <person name="Yosida M."/>
            <person name="Hotuta T."/>
            <person name="Kusano J."/>
            <person name="Kanehori K."/>
            <person name="Takahashi-Fujii A."/>
            <person name="Hara H."/>
            <person name="Tanase T.-O."/>
            <person name="Nomura Y."/>
            <person name="Togiya S."/>
            <person name="Komai F."/>
            <person name="Hara R."/>
            <person name="Takeuchi K."/>
            <person name="Arita M."/>
            <person name="Imose N."/>
            <person name="Musashino K."/>
            <person name="Yuuki H."/>
            <person name="Oshima A."/>
            <person name="Sasaki N."/>
            <person name="Aotsuka S."/>
            <person name="Yoshikawa Y."/>
            <person name="Matsunawa H."/>
            <person name="Ichihara T."/>
            <person name="Shiohata N."/>
            <person name="Sano S."/>
            <person name="Moriya S."/>
            <person name="Momiyama H."/>
            <person name="Satoh N."/>
            <person name="Takami S."/>
            <person name="Terashima Y."/>
            <person name="Suzuki O."/>
            <person name="Nakagawa S."/>
            <person name="Senoh A."/>
            <person name="Mizoguchi H."/>
            <person name="Goto Y."/>
            <person name="Shimizu F."/>
            <person name="Wakebe H."/>
            <person name="Hishigaki H."/>
            <person name="Watanabe T."/>
            <person name="Sugiyama A."/>
            <person name="Takemoto M."/>
            <person name="Kawakami B."/>
            <person name="Yamazaki M."/>
            <person name="Watanabe K."/>
            <person name="Kumagai A."/>
            <person name="Itakura S."/>
            <person name="Fukuzumi Y."/>
            <person name="Fujimori Y."/>
            <person name="Komiyama M."/>
            <person name="Tashiro H."/>
            <person name="Tanigami A."/>
            <person name="Fujiwara T."/>
            <person name="Ono T."/>
            <person name="Yamada K."/>
            <person name="Fujii Y."/>
            <person name="Ozaki K."/>
            <person name="Hirao M."/>
            <person name="Ohmori Y."/>
            <person name="Kawabata A."/>
            <person name="Hikiji T."/>
            <person name="Kobatake N."/>
            <person name="Inagaki H."/>
            <person name="Ikema Y."/>
            <person name="Okamoto S."/>
            <person name="Okitani R."/>
            <person name="Kawakami T."/>
            <person name="Noguchi S."/>
            <person name="Itoh T."/>
            <person name="Shigeta K."/>
            <person name="Senba T."/>
            <person name="Matsumura K."/>
            <person name="Nakajima Y."/>
            <person name="Mizuno T."/>
            <person name="Morinaga M."/>
            <person name="Sasaki M."/>
            <person name="Togashi T."/>
            <person name="Oyama M."/>
            <person name="Hata H."/>
            <person name="Watanabe M."/>
            <person name="Komatsu T."/>
            <person name="Mizushima-Sugano J."/>
            <person name="Satoh T."/>
            <person name="Shirai Y."/>
            <person name="Takahashi Y."/>
            <person name="Nakagawa K."/>
            <person name="Okumura K."/>
            <person name="Nagase T."/>
            <person name="Nomura N."/>
            <person name="Kikuchi H."/>
            <person name="Masuho Y."/>
            <person name="Yamashita R."/>
            <person name="Nakai K."/>
            <person name="Yada T."/>
            <person name="Nakamura Y."/>
            <person name="Ohara O."/>
            <person name="Isogai T."/>
            <person name="Sugano S."/>
        </authorList>
    </citation>
    <scope>NUCLEOTIDE SEQUENCE [LARGE SCALE MRNA] (ISOFORMS 1; 2 AND 3)</scope>
    <source>
        <tissue>Brain cortex</tissue>
        <tissue>Embryo</tissue>
        <tissue>Thalamus</tissue>
    </source>
</reference>
<reference key="2">
    <citation type="journal article" date="2007" name="BMC Genomics">
        <title>The full-ORF clone resource of the German cDNA consortium.</title>
        <authorList>
            <person name="Bechtel S."/>
            <person name="Rosenfelder H."/>
            <person name="Duda A."/>
            <person name="Schmidt C.P."/>
            <person name="Ernst U."/>
            <person name="Wellenreuther R."/>
            <person name="Mehrle A."/>
            <person name="Schuster C."/>
            <person name="Bahr A."/>
            <person name="Bloecker H."/>
            <person name="Heubner D."/>
            <person name="Hoerlein A."/>
            <person name="Michel G."/>
            <person name="Wedler H."/>
            <person name="Koehrer K."/>
            <person name="Ottenwaelder B."/>
            <person name="Poustka A."/>
            <person name="Wiemann S."/>
            <person name="Schupp I."/>
        </authorList>
    </citation>
    <scope>NUCLEOTIDE SEQUENCE [LARGE SCALE MRNA] (ISOFORM 1)</scope>
    <source>
        <tissue>Endometrium</tissue>
    </source>
</reference>
<reference key="3">
    <citation type="journal article" date="2003" name="Science">
        <title>Human chromosome 7: DNA sequence and biology.</title>
        <authorList>
            <person name="Scherer S.W."/>
            <person name="Cheung J."/>
            <person name="MacDonald J.R."/>
            <person name="Osborne L.R."/>
            <person name="Nakabayashi K."/>
            <person name="Herbrick J.-A."/>
            <person name="Carson A.R."/>
            <person name="Parker-Katiraee L."/>
            <person name="Skaug J."/>
            <person name="Khaja R."/>
            <person name="Zhang J."/>
            <person name="Hudek A.K."/>
            <person name="Li M."/>
            <person name="Haddad M."/>
            <person name="Duggan G.E."/>
            <person name="Fernandez B.A."/>
            <person name="Kanematsu E."/>
            <person name="Gentles S."/>
            <person name="Christopoulos C.C."/>
            <person name="Choufani S."/>
            <person name="Kwasnicka D."/>
            <person name="Zheng X.H."/>
            <person name="Lai Z."/>
            <person name="Nusskern D.R."/>
            <person name="Zhang Q."/>
            <person name="Gu Z."/>
            <person name="Lu F."/>
            <person name="Zeesman S."/>
            <person name="Nowaczyk M.J."/>
            <person name="Teshima I."/>
            <person name="Chitayat D."/>
            <person name="Shuman C."/>
            <person name="Weksberg R."/>
            <person name="Zackai E.H."/>
            <person name="Grebe T.A."/>
            <person name="Cox S.R."/>
            <person name="Kirkpatrick S.J."/>
            <person name="Rahman N."/>
            <person name="Friedman J.M."/>
            <person name="Heng H.H.Q."/>
            <person name="Pelicci P.G."/>
            <person name="Lo-Coco F."/>
            <person name="Belloni E."/>
            <person name="Shaffer L.G."/>
            <person name="Pober B."/>
            <person name="Morton C.C."/>
            <person name="Gusella J.F."/>
            <person name="Bruns G.A.P."/>
            <person name="Korf B.R."/>
            <person name="Quade B.J."/>
            <person name="Ligon A.H."/>
            <person name="Ferguson H."/>
            <person name="Higgins A.W."/>
            <person name="Leach N.T."/>
            <person name="Herrick S.R."/>
            <person name="Lemyre E."/>
            <person name="Farra C.G."/>
            <person name="Kim H.-G."/>
            <person name="Summers A.M."/>
            <person name="Gripp K.W."/>
            <person name="Roberts W."/>
            <person name="Szatmari P."/>
            <person name="Winsor E.J.T."/>
            <person name="Grzeschik K.-H."/>
            <person name="Teebi A."/>
            <person name="Minassian B.A."/>
            <person name="Kere J."/>
            <person name="Armengol L."/>
            <person name="Pujana M.A."/>
            <person name="Estivill X."/>
            <person name="Wilson M.D."/>
            <person name="Koop B.F."/>
            <person name="Tosi S."/>
            <person name="Moore G.E."/>
            <person name="Boright A.P."/>
            <person name="Zlotorynski E."/>
            <person name="Kerem B."/>
            <person name="Kroisel P.M."/>
            <person name="Petek E."/>
            <person name="Oscier D.G."/>
            <person name="Mould S.J."/>
            <person name="Doehner H."/>
            <person name="Doehner K."/>
            <person name="Rommens J.M."/>
            <person name="Vincent J.B."/>
            <person name="Venter J.C."/>
            <person name="Li P.W."/>
            <person name="Mural R.J."/>
            <person name="Adams M.D."/>
            <person name="Tsui L.-C."/>
        </authorList>
    </citation>
    <scope>NUCLEOTIDE SEQUENCE [LARGE SCALE GENOMIC DNA]</scope>
</reference>
<reference key="4">
    <citation type="submission" date="2005-09" db="EMBL/GenBank/DDBJ databases">
        <authorList>
            <person name="Mural R.J."/>
            <person name="Istrail S."/>
            <person name="Sutton G.G."/>
            <person name="Florea L."/>
            <person name="Halpern A.L."/>
            <person name="Mobarry C.M."/>
            <person name="Lippert R."/>
            <person name="Walenz B."/>
            <person name="Shatkay H."/>
            <person name="Dew I."/>
            <person name="Miller J.R."/>
            <person name="Flanigan M.J."/>
            <person name="Edwards N.J."/>
            <person name="Bolanos R."/>
            <person name="Fasulo D."/>
            <person name="Halldorsson B.V."/>
            <person name="Hannenhalli S."/>
            <person name="Turner R."/>
            <person name="Yooseph S."/>
            <person name="Lu F."/>
            <person name="Nusskern D.R."/>
            <person name="Shue B.C."/>
            <person name="Zheng X.H."/>
            <person name="Zhong F."/>
            <person name="Delcher A.L."/>
            <person name="Huson D.H."/>
            <person name="Kravitz S.A."/>
            <person name="Mouchard L."/>
            <person name="Reinert K."/>
            <person name="Remington K.A."/>
            <person name="Clark A.G."/>
            <person name="Waterman M.S."/>
            <person name="Eichler E.E."/>
            <person name="Adams M.D."/>
            <person name="Hunkapiller M.W."/>
            <person name="Myers E.W."/>
            <person name="Venter J.C."/>
        </authorList>
    </citation>
    <scope>NUCLEOTIDE SEQUENCE [LARGE SCALE GENOMIC DNA]</scope>
</reference>
<reference key="5">
    <citation type="journal article" date="2004" name="Genome Res.">
        <title>The status, quality, and expansion of the NIH full-length cDNA project: the Mammalian Gene Collection (MGC).</title>
        <authorList>
            <consortium name="The MGC Project Team"/>
        </authorList>
    </citation>
    <scope>NUCLEOTIDE SEQUENCE [LARGE SCALE MRNA] (ISOFORM 1)</scope>
    <source>
        <tissue>Brain</tissue>
        <tissue>Pancreas</tissue>
    </source>
</reference>
<reference key="6">
    <citation type="submission" date="2002-12" db="EMBL/GenBank/DDBJ databases">
        <title>Identification of human transforming gene.</title>
        <authorList>
            <person name="Kim J.W."/>
        </authorList>
    </citation>
    <scope>NUCLEOTIDE SEQUENCE [MRNA] OF 6-227 (ISOFORM 3)</scope>
</reference>
<reference key="7">
    <citation type="journal article" date="2003" name="Oncogene">
        <title>Large-scale identification and characterization of human genes that activate NF-kappaB and MAPK signaling pathways.</title>
        <authorList>
            <person name="Matsuda A."/>
            <person name="Suzuki Y."/>
            <person name="Honda G."/>
            <person name="Muramatsu S."/>
            <person name="Matsuzaki O."/>
            <person name="Nagano Y."/>
            <person name="Doi T."/>
            <person name="Shimotohno K."/>
            <person name="Harada T."/>
            <person name="Nishida E."/>
            <person name="Hayashi H."/>
            <person name="Sugano S."/>
        </authorList>
    </citation>
    <scope>NUCLEOTIDE SEQUENCE [LARGE SCALE MRNA] OF 119-227 (ISOFORMS 1/2)</scope>
    <source>
        <tissue>Lung fibroblast</tissue>
    </source>
</reference>
<reference key="8">
    <citation type="journal article" date="2008" name="J. Biol. Chem.">
        <title>Novel oxidative stress-responsive gene ERS25 functions as a regulator of the heat-shock and cell death response.</title>
        <authorList>
            <person name="Hwang S.O."/>
            <person name="Boswell S.A."/>
            <person name="Seo J.-S."/>
            <person name="Lee S.W."/>
        </authorList>
    </citation>
    <scope>IDENTIFICATION</scope>
</reference>
<reference key="9">
    <citation type="journal article" date="2009" name="J. Proteome Res.">
        <title>Glycoproteomics analysis of human liver tissue by combination of multiple enzyme digestion and hydrazide chemistry.</title>
        <authorList>
            <person name="Chen R."/>
            <person name="Jiang X."/>
            <person name="Sun D."/>
            <person name="Han G."/>
            <person name="Wang F."/>
            <person name="Ye M."/>
            <person name="Wang L."/>
            <person name="Zou H."/>
        </authorList>
    </citation>
    <scope>GLYCOSYLATION [LARGE SCALE ANALYSIS] AT ASN-117</scope>
    <source>
        <tissue>Liver</tissue>
    </source>
</reference>
<reference key="10">
    <citation type="journal article" date="2011" name="BMC Syst. Biol.">
        <title>Initial characterization of the human central proteome.</title>
        <authorList>
            <person name="Burkard T.R."/>
            <person name="Planyavsky M."/>
            <person name="Kaupe I."/>
            <person name="Breitwieser F.P."/>
            <person name="Buerckstuemmer T."/>
            <person name="Bennett K.L."/>
            <person name="Superti-Furga G."/>
            <person name="Colinge J."/>
        </authorList>
    </citation>
    <scope>IDENTIFICATION BY MASS SPECTROMETRY [LARGE SCALE ANALYSIS]</scope>
</reference>
<reference key="11">
    <citation type="journal article" date="2015" name="Proteomics">
        <title>N-terminome analysis of the human mitochondrial proteome.</title>
        <authorList>
            <person name="Vaca Jacome A.S."/>
            <person name="Rabilloud T."/>
            <person name="Schaeffer-Reiss C."/>
            <person name="Rompais M."/>
            <person name="Ayoub D."/>
            <person name="Lane L."/>
            <person name="Bairoch A."/>
            <person name="Van Dorsselaer A."/>
            <person name="Carapito C."/>
        </authorList>
    </citation>
    <scope>IDENTIFICATION BY MASS SPECTROMETRY [LARGE SCALE ANALYSIS]</scope>
</reference>
<name>TMED4_HUMAN</name>
<evidence type="ECO:0000250" key="1"/>
<evidence type="ECO:0000255" key="2"/>
<evidence type="ECO:0000255" key="3">
    <source>
        <dbReference type="PROSITE-ProRule" id="PRU00096"/>
    </source>
</evidence>
<evidence type="ECO:0000269" key="4">
    <source>
    </source>
</evidence>
<evidence type="ECO:0000303" key="5">
    <source>
    </source>
</evidence>
<evidence type="ECO:0000303" key="6">
    <source ref="6"/>
</evidence>
<evidence type="ECO:0000305" key="7"/>
<organism>
    <name type="scientific">Homo sapiens</name>
    <name type="common">Human</name>
    <dbReference type="NCBI Taxonomy" id="9606"/>
    <lineage>
        <taxon>Eukaryota</taxon>
        <taxon>Metazoa</taxon>
        <taxon>Chordata</taxon>
        <taxon>Craniata</taxon>
        <taxon>Vertebrata</taxon>
        <taxon>Euteleostomi</taxon>
        <taxon>Mammalia</taxon>
        <taxon>Eutheria</taxon>
        <taxon>Euarchontoglires</taxon>
        <taxon>Primates</taxon>
        <taxon>Haplorrhini</taxon>
        <taxon>Catarrhini</taxon>
        <taxon>Hominidae</taxon>
        <taxon>Homo</taxon>
    </lineage>
</organism>
<dbReference type="EMBL" id="AK074557">
    <property type="protein sequence ID" value="BAC11058.1"/>
    <property type="molecule type" value="mRNA"/>
</dbReference>
<dbReference type="EMBL" id="AK290125">
    <property type="protein sequence ID" value="BAF82814.1"/>
    <property type="molecule type" value="mRNA"/>
</dbReference>
<dbReference type="EMBL" id="AK294122">
    <property type="protein sequence ID" value="BAG57455.1"/>
    <property type="molecule type" value="mRNA"/>
</dbReference>
<dbReference type="EMBL" id="BX647965">
    <property type="status" value="NOT_ANNOTATED_CDS"/>
    <property type="molecule type" value="mRNA"/>
</dbReference>
<dbReference type="EMBL" id="CH236960">
    <property type="protein sequence ID" value="EAL23751.1"/>
    <property type="molecule type" value="Genomic_DNA"/>
</dbReference>
<dbReference type="EMBL" id="CH471128">
    <property type="protein sequence ID" value="EAW61090.1"/>
    <property type="molecule type" value="Genomic_DNA"/>
</dbReference>
<dbReference type="EMBL" id="CH471128">
    <property type="protein sequence ID" value="EAW61091.1"/>
    <property type="molecule type" value="Genomic_DNA"/>
</dbReference>
<dbReference type="EMBL" id="BC052641">
    <property type="protein sequence ID" value="AAH52641.1"/>
    <property type="molecule type" value="mRNA"/>
</dbReference>
<dbReference type="EMBL" id="BC057851">
    <property type="protein sequence ID" value="AAH57851.1"/>
    <property type="molecule type" value="mRNA"/>
</dbReference>
<dbReference type="EMBL" id="AY191223">
    <property type="protein sequence ID" value="AAP20105.1"/>
    <property type="status" value="ALT_INIT"/>
    <property type="molecule type" value="mRNA"/>
</dbReference>
<dbReference type="EMBL" id="AB097009">
    <property type="protein sequence ID" value="BAC77362.1"/>
    <property type="status" value="ALT_INIT"/>
    <property type="molecule type" value="mRNA"/>
</dbReference>
<dbReference type="CCDS" id="CCDS5493.1">
    <molecule id="Q7Z7H5-1"/>
</dbReference>
<dbReference type="CCDS" id="CCDS78227.1">
    <molecule id="Q7Z7H5-3"/>
</dbReference>
<dbReference type="RefSeq" id="NP_001289987.1">
    <molecule id="Q7Z7H5-3"/>
    <property type="nucleotide sequence ID" value="NM_001303058.2"/>
</dbReference>
<dbReference type="RefSeq" id="NP_001289989.1">
    <property type="nucleotide sequence ID" value="NM_001303060.1"/>
</dbReference>
<dbReference type="RefSeq" id="NP_872353.2">
    <molecule id="Q7Z7H5-1"/>
    <property type="nucleotide sequence ID" value="NM_182547.3"/>
</dbReference>
<dbReference type="SMR" id="Q7Z7H5"/>
<dbReference type="BioGRID" id="128780">
    <property type="interactions" value="97"/>
</dbReference>
<dbReference type="FunCoup" id="Q7Z7H5">
    <property type="interactions" value="2502"/>
</dbReference>
<dbReference type="IntAct" id="Q7Z7H5">
    <property type="interactions" value="51"/>
</dbReference>
<dbReference type="STRING" id="9606.ENSP00000404042"/>
<dbReference type="GlyConnect" id="1844">
    <property type="glycosylation" value="1 N-Linked glycan (1 site)"/>
</dbReference>
<dbReference type="GlyCosmos" id="Q7Z7H5">
    <property type="glycosylation" value="1 site, 1 glycan"/>
</dbReference>
<dbReference type="GlyGen" id="Q7Z7H5">
    <property type="glycosylation" value="4 sites, 5 N-linked glycans (1 site), 1 O-linked glycan (3 sites)"/>
</dbReference>
<dbReference type="iPTMnet" id="Q7Z7H5"/>
<dbReference type="PhosphoSitePlus" id="Q7Z7H5"/>
<dbReference type="SwissPalm" id="Q7Z7H5"/>
<dbReference type="BioMuta" id="TMED4"/>
<dbReference type="DMDM" id="62287892"/>
<dbReference type="jPOST" id="Q7Z7H5"/>
<dbReference type="MassIVE" id="Q7Z7H5"/>
<dbReference type="PaxDb" id="9606-ENSP00000404042"/>
<dbReference type="PeptideAtlas" id="Q7Z7H5"/>
<dbReference type="ProteomicsDB" id="69548">
    <molecule id="Q7Z7H5-1"/>
</dbReference>
<dbReference type="ProteomicsDB" id="69549">
    <molecule id="Q7Z7H5-2"/>
</dbReference>
<dbReference type="ProteomicsDB" id="69550">
    <molecule id="Q7Z7H5-3"/>
</dbReference>
<dbReference type="Pumba" id="Q7Z7H5"/>
<dbReference type="Antibodypedia" id="13441">
    <property type="antibodies" value="142 antibodies from 25 providers"/>
</dbReference>
<dbReference type="DNASU" id="222068"/>
<dbReference type="Ensembl" id="ENST00000457408.7">
    <molecule id="Q7Z7H5-1"/>
    <property type="protein sequence ID" value="ENSP00000404042.2"/>
    <property type="gene ID" value="ENSG00000158604.16"/>
</dbReference>
<dbReference type="Ensembl" id="ENST00000481238.1">
    <molecule id="Q7Z7H5-3"/>
    <property type="protein sequence ID" value="ENSP00000417443.1"/>
    <property type="gene ID" value="ENSG00000158604.16"/>
</dbReference>
<dbReference type="GeneID" id="222068"/>
<dbReference type="KEGG" id="hsa:222068"/>
<dbReference type="MANE-Select" id="ENST00000457408.7">
    <property type="protein sequence ID" value="ENSP00000404042.2"/>
    <property type="RefSeq nucleotide sequence ID" value="NM_182547.4"/>
    <property type="RefSeq protein sequence ID" value="NP_872353.2"/>
</dbReference>
<dbReference type="UCSC" id="uc003tli.4">
    <molecule id="Q7Z7H5-1"/>
    <property type="organism name" value="human"/>
</dbReference>
<dbReference type="AGR" id="HGNC:22301"/>
<dbReference type="CTD" id="222068"/>
<dbReference type="GeneCards" id="TMED4"/>
<dbReference type="HGNC" id="HGNC:22301">
    <property type="gene designation" value="TMED4"/>
</dbReference>
<dbReference type="HPA" id="ENSG00000158604">
    <property type="expression patterns" value="Low tissue specificity"/>
</dbReference>
<dbReference type="MIM" id="612038">
    <property type="type" value="gene"/>
</dbReference>
<dbReference type="neXtProt" id="NX_Q7Z7H5"/>
<dbReference type="OpenTargets" id="ENSG00000158604"/>
<dbReference type="PharmGKB" id="PA134983854"/>
<dbReference type="VEuPathDB" id="HostDB:ENSG00000158604"/>
<dbReference type="eggNOG" id="KOG1690">
    <property type="taxonomic scope" value="Eukaryota"/>
</dbReference>
<dbReference type="GeneTree" id="ENSGT00940000159012"/>
<dbReference type="HOGENOM" id="CLU_066963_2_2_1"/>
<dbReference type="InParanoid" id="Q7Z7H5"/>
<dbReference type="OMA" id="YYICISC"/>
<dbReference type="OrthoDB" id="3427at2759"/>
<dbReference type="PAN-GO" id="Q7Z7H5">
    <property type="GO annotations" value="7 GO annotations based on evolutionary models"/>
</dbReference>
<dbReference type="PhylomeDB" id="Q7Z7H5"/>
<dbReference type="TreeFam" id="TF314123"/>
<dbReference type="PathwayCommons" id="Q7Z7H5"/>
<dbReference type="SignaLink" id="Q7Z7H5"/>
<dbReference type="BioGRID-ORCS" id="222068">
    <property type="hits" value="10 hits in 1155 CRISPR screens"/>
</dbReference>
<dbReference type="ChiTaRS" id="TMED4">
    <property type="organism name" value="human"/>
</dbReference>
<dbReference type="GeneWiki" id="TMED4"/>
<dbReference type="GenomeRNAi" id="222068"/>
<dbReference type="Pharos" id="Q7Z7H5">
    <property type="development level" value="Tdark"/>
</dbReference>
<dbReference type="PRO" id="PR:Q7Z7H5"/>
<dbReference type="Proteomes" id="UP000005640">
    <property type="component" value="Chromosome 7"/>
</dbReference>
<dbReference type="RNAct" id="Q7Z7H5">
    <property type="molecule type" value="protein"/>
</dbReference>
<dbReference type="Bgee" id="ENSG00000158604">
    <property type="expression patterns" value="Expressed in oviduct epithelium and 190 other cell types or tissues"/>
</dbReference>
<dbReference type="ExpressionAtlas" id="Q7Z7H5">
    <property type="expression patterns" value="baseline and differential"/>
</dbReference>
<dbReference type="GO" id="GO:0030134">
    <property type="term" value="C:COPII-coated ER to Golgi transport vesicle"/>
    <property type="evidence" value="ECO:0000318"/>
    <property type="project" value="GO_Central"/>
</dbReference>
<dbReference type="GO" id="GO:0005783">
    <property type="term" value="C:endoplasmic reticulum"/>
    <property type="evidence" value="ECO:0000318"/>
    <property type="project" value="GO_Central"/>
</dbReference>
<dbReference type="GO" id="GO:0005789">
    <property type="term" value="C:endoplasmic reticulum membrane"/>
    <property type="evidence" value="ECO:0007669"/>
    <property type="project" value="UniProtKB-SubCell"/>
</dbReference>
<dbReference type="GO" id="GO:0005793">
    <property type="term" value="C:endoplasmic reticulum-Golgi intermediate compartment"/>
    <property type="evidence" value="ECO:0000318"/>
    <property type="project" value="GO_Central"/>
</dbReference>
<dbReference type="GO" id="GO:0005794">
    <property type="term" value="C:Golgi apparatus"/>
    <property type="evidence" value="ECO:0000318"/>
    <property type="project" value="GO_Central"/>
</dbReference>
<dbReference type="GO" id="GO:0006888">
    <property type="term" value="P:endoplasmic reticulum to Golgi vesicle-mediated transport"/>
    <property type="evidence" value="ECO:0000318"/>
    <property type="project" value="GO_Central"/>
</dbReference>
<dbReference type="GO" id="GO:0007030">
    <property type="term" value="P:Golgi organization"/>
    <property type="evidence" value="ECO:0000318"/>
    <property type="project" value="GO_Central"/>
</dbReference>
<dbReference type="GO" id="GO:0006886">
    <property type="term" value="P:intracellular protein transport"/>
    <property type="evidence" value="ECO:0000318"/>
    <property type="project" value="GO_Central"/>
</dbReference>
<dbReference type="GO" id="GO:0043123">
    <property type="term" value="P:positive regulation of canonical NF-kappaB signal transduction"/>
    <property type="evidence" value="ECO:0007001"/>
    <property type="project" value="UniProtKB"/>
</dbReference>
<dbReference type="InterPro" id="IPR015720">
    <property type="entry name" value="Emp24-like"/>
</dbReference>
<dbReference type="InterPro" id="IPR009038">
    <property type="entry name" value="GOLD_dom"/>
</dbReference>
<dbReference type="PANTHER" id="PTHR22811">
    <property type="entry name" value="TRANSMEMBRANE EMP24 DOMAIN-CONTAINING PROTEIN"/>
    <property type="match status" value="1"/>
</dbReference>
<dbReference type="Pfam" id="PF01105">
    <property type="entry name" value="EMP24_GP25L"/>
    <property type="match status" value="1"/>
</dbReference>
<dbReference type="SMART" id="SM01190">
    <property type="entry name" value="EMP24_GP25L"/>
    <property type="match status" value="1"/>
</dbReference>
<dbReference type="PROSITE" id="PS50866">
    <property type="entry name" value="GOLD"/>
    <property type="match status" value="1"/>
</dbReference>
<feature type="signal peptide" evidence="2">
    <location>
        <begin position="1"/>
        <end position="29"/>
    </location>
</feature>
<feature type="chain" id="PRO_0000010387" description="Transmembrane emp24 domain-containing protein 4">
    <location>
        <begin position="30"/>
        <end position="227"/>
    </location>
</feature>
<feature type="topological domain" description="Lumenal" evidence="2">
    <location>
        <begin position="30"/>
        <end position="194"/>
    </location>
</feature>
<feature type="transmembrane region" description="Helical" evidence="2">
    <location>
        <begin position="195"/>
        <end position="212"/>
    </location>
</feature>
<feature type="topological domain" description="Cytoplasmic" evidence="2">
    <location>
        <begin position="213"/>
        <end position="227"/>
    </location>
</feature>
<feature type="domain" description="GOLD" evidence="3">
    <location>
        <begin position="39"/>
        <end position="137"/>
    </location>
</feature>
<feature type="coiled-coil region" evidence="2">
    <location>
        <begin position="147"/>
        <end position="176"/>
    </location>
</feature>
<feature type="short sequence motif" description="COPI vesicle coat-binding" evidence="2">
    <location>
        <begin position="220"/>
        <end position="227"/>
    </location>
</feature>
<feature type="short sequence motif" description="COPII vesicle coat-binding" evidence="2">
    <location>
        <begin position="220"/>
        <end position="221"/>
    </location>
</feature>
<feature type="glycosylation site" description="N-linked (GlcNAc...) asparagine" evidence="4">
    <location>
        <position position="117"/>
    </location>
</feature>
<feature type="splice variant" id="VSP_035698" description="In isoform 2." evidence="5">
    <location>
        <begin position="59"/>
        <end position="74"/>
    </location>
</feature>
<feature type="splice variant" id="VSP_035699" description="In isoform 3." evidence="5 6">
    <original>YREERFRL</original>
    <variation>ASAYLLVI</variation>
    <location>
        <begin position="179"/>
        <end position="186"/>
    </location>
</feature>
<feature type="splice variant" id="VSP_035700" description="In isoform 3." evidence="5 6">
    <location>
        <begin position="187"/>
        <end position="227"/>
    </location>
</feature>
<protein>
    <recommendedName>
        <fullName>Transmembrane emp24 domain-containing protein 4</fullName>
    </recommendedName>
    <alternativeName>
        <fullName>Endoplasmic reticulum stress-response protein 25</fullName>
        <shortName>ERS25</shortName>
    </alternativeName>
    <alternativeName>
        <fullName>GMP25iso</fullName>
    </alternativeName>
    <alternativeName>
        <fullName>Putative NF-kappa-B-activating protein 156</fullName>
    </alternativeName>
    <alternativeName>
        <fullName>p24 family protein alpha-3</fullName>
        <shortName>p24alpha3</shortName>
    </alternativeName>
</protein>
<comment type="function">
    <text evidence="1">Involved in vesicular protein trafficking, mainly in the early secretory pathway. targeting. Involved in the maintenance of the Golgi apparatus. Appears to play a role in the biosynthesis of secreted cargo including processing. Involved in endoplasmic reticulum stress response. May play a role in the regulation of heat-shock response and apoptosis (By similarity).</text>
</comment>
<comment type="subcellular location">
    <subcellularLocation>
        <location evidence="1">Endoplasmic reticulum membrane</location>
        <topology evidence="1">Single-pass type I membrane protein</topology>
    </subcellularLocation>
</comment>
<comment type="alternative products">
    <event type="alternative splicing"/>
    <isoform>
        <id>Q7Z7H5-1</id>
        <name>1</name>
        <sequence type="displayed"/>
    </isoform>
    <isoform>
        <id>Q7Z7H5-2</id>
        <name>2</name>
        <sequence type="described" ref="VSP_035698"/>
    </isoform>
    <isoform>
        <id>Q7Z7H5-3</id>
        <name>3</name>
        <sequence type="described" ref="VSP_035699 VSP_035700"/>
    </isoform>
</comment>
<comment type="similarity">
    <text evidence="7">Belongs to the EMP24/GP25L family.</text>
</comment>
<comment type="sequence caution" evidence="7">
    <conflict type="erroneous initiation">
        <sequence resource="EMBL-CDS" id="AAP20105"/>
    </conflict>
    <text>Truncated N-terminus.</text>
</comment>
<comment type="sequence caution" evidence="7">
    <conflict type="erroneous initiation">
        <sequence resource="EMBL-CDS" id="BAC77362"/>
    </conflict>
    <text>Truncated N-terminus.</text>
</comment>